<proteinExistence type="inferred from homology"/>
<name>MRAY_ALKMQ</name>
<gene>
    <name evidence="1" type="primary">mraY</name>
    <name type="ordered locus">Amet_2882</name>
</gene>
<evidence type="ECO:0000255" key="1">
    <source>
        <dbReference type="HAMAP-Rule" id="MF_00038"/>
    </source>
</evidence>
<keyword id="KW-0131">Cell cycle</keyword>
<keyword id="KW-0132">Cell division</keyword>
<keyword id="KW-1003">Cell membrane</keyword>
<keyword id="KW-0133">Cell shape</keyword>
<keyword id="KW-0961">Cell wall biogenesis/degradation</keyword>
<keyword id="KW-0460">Magnesium</keyword>
<keyword id="KW-0472">Membrane</keyword>
<keyword id="KW-0479">Metal-binding</keyword>
<keyword id="KW-0573">Peptidoglycan synthesis</keyword>
<keyword id="KW-1185">Reference proteome</keyword>
<keyword id="KW-0808">Transferase</keyword>
<keyword id="KW-0812">Transmembrane</keyword>
<keyword id="KW-1133">Transmembrane helix</keyword>
<sequence length="331" mass="35448">MMNHNQIIYTIIIGFIITLILGPLTIPFLRRLKVGQTIREEGPKTHMAKSGTPTIGGIILIMSIIITSLTSGLINEELWIALAATVAFGIIGFIDDFIKVILKRNLGLRAYQKLILQGTIAVILAIYQSRTSIMGTEVIVPFVGEGITIAGFTITQTIDLGILYIPFIVFVVVATVNSVNLTDGLDGLAAGVTLIIAAFFALVAMSWGYVSLAIFAAAITGACLGFLKFNSHPAQVFMGDTGSLALGGAIATIAVLMNVVLIIPIVGGIYFAEAVSVILQVISFKLTGKRIFKMSPLHHHYELSGWAETKVVIVFWVVTVILCLVGMLALS</sequence>
<feature type="chain" id="PRO_0000332524" description="Phospho-N-acetylmuramoyl-pentapeptide-transferase">
    <location>
        <begin position="1"/>
        <end position="331"/>
    </location>
</feature>
<feature type="transmembrane region" description="Helical" evidence="1">
    <location>
        <begin position="7"/>
        <end position="27"/>
    </location>
</feature>
<feature type="transmembrane region" description="Helical" evidence="1">
    <location>
        <begin position="54"/>
        <end position="74"/>
    </location>
</feature>
<feature type="transmembrane region" description="Helical" evidence="1">
    <location>
        <begin position="78"/>
        <end position="98"/>
    </location>
</feature>
<feature type="transmembrane region" description="Helical" evidence="1">
    <location>
        <begin position="106"/>
        <end position="126"/>
    </location>
</feature>
<feature type="transmembrane region" description="Helical" evidence="1">
    <location>
        <begin position="133"/>
        <end position="153"/>
    </location>
</feature>
<feature type="transmembrane region" description="Helical" evidence="1">
    <location>
        <begin position="154"/>
        <end position="174"/>
    </location>
</feature>
<feature type="transmembrane region" description="Helical" evidence="1">
    <location>
        <begin position="195"/>
        <end position="215"/>
    </location>
</feature>
<feature type="transmembrane region" description="Helical" evidence="1">
    <location>
        <begin position="249"/>
        <end position="269"/>
    </location>
</feature>
<feature type="transmembrane region" description="Helical" evidence="1">
    <location>
        <begin position="311"/>
        <end position="331"/>
    </location>
</feature>
<comment type="function">
    <text evidence="1">Catalyzes the initial step of the lipid cycle reactions in the biosynthesis of the cell wall peptidoglycan: transfers peptidoglycan precursor phospho-MurNAc-pentapeptide from UDP-MurNAc-pentapeptide onto the lipid carrier undecaprenyl phosphate, yielding undecaprenyl-pyrophosphoryl-MurNAc-pentapeptide, known as lipid I.</text>
</comment>
<comment type="catalytic activity">
    <reaction evidence="1">
        <text>UDP-N-acetyl-alpha-D-muramoyl-L-alanyl-gamma-D-glutamyl-meso-2,6-diaminopimeloyl-D-alanyl-D-alanine + di-trans,octa-cis-undecaprenyl phosphate = di-trans,octa-cis-undecaprenyl diphospho-N-acetyl-alpha-D-muramoyl-L-alanyl-D-glutamyl-meso-2,6-diaminopimeloyl-D-alanyl-D-alanine + UMP</text>
        <dbReference type="Rhea" id="RHEA:28386"/>
        <dbReference type="ChEBI" id="CHEBI:57865"/>
        <dbReference type="ChEBI" id="CHEBI:60392"/>
        <dbReference type="ChEBI" id="CHEBI:61386"/>
        <dbReference type="ChEBI" id="CHEBI:61387"/>
        <dbReference type="EC" id="2.7.8.13"/>
    </reaction>
</comment>
<comment type="cofactor">
    <cofactor evidence="1">
        <name>Mg(2+)</name>
        <dbReference type="ChEBI" id="CHEBI:18420"/>
    </cofactor>
</comment>
<comment type="pathway">
    <text evidence="1">Cell wall biogenesis; peptidoglycan biosynthesis.</text>
</comment>
<comment type="subcellular location">
    <subcellularLocation>
        <location evidence="1">Cell membrane</location>
        <topology evidence="1">Multi-pass membrane protein</topology>
    </subcellularLocation>
</comment>
<comment type="similarity">
    <text evidence="1">Belongs to the glycosyltransferase 4 family. MraY subfamily.</text>
</comment>
<organism>
    <name type="scientific">Alkaliphilus metalliredigens (strain QYMF)</name>
    <dbReference type="NCBI Taxonomy" id="293826"/>
    <lineage>
        <taxon>Bacteria</taxon>
        <taxon>Bacillati</taxon>
        <taxon>Bacillota</taxon>
        <taxon>Clostridia</taxon>
        <taxon>Peptostreptococcales</taxon>
        <taxon>Natronincolaceae</taxon>
        <taxon>Alkaliphilus</taxon>
    </lineage>
</organism>
<dbReference type="EC" id="2.7.8.13" evidence="1"/>
<dbReference type="EMBL" id="CP000724">
    <property type="protein sequence ID" value="ABR49032.1"/>
    <property type="molecule type" value="Genomic_DNA"/>
</dbReference>
<dbReference type="RefSeq" id="WP_012064000.1">
    <property type="nucleotide sequence ID" value="NC_009633.1"/>
</dbReference>
<dbReference type="SMR" id="A6TS64"/>
<dbReference type="STRING" id="293826.Amet_2882"/>
<dbReference type="KEGG" id="amt:Amet_2882"/>
<dbReference type="eggNOG" id="COG0472">
    <property type="taxonomic scope" value="Bacteria"/>
</dbReference>
<dbReference type="HOGENOM" id="CLU_023982_0_1_9"/>
<dbReference type="OrthoDB" id="9805475at2"/>
<dbReference type="UniPathway" id="UPA00219"/>
<dbReference type="Proteomes" id="UP000001572">
    <property type="component" value="Chromosome"/>
</dbReference>
<dbReference type="GO" id="GO:0005886">
    <property type="term" value="C:plasma membrane"/>
    <property type="evidence" value="ECO:0007669"/>
    <property type="project" value="UniProtKB-SubCell"/>
</dbReference>
<dbReference type="GO" id="GO:0046872">
    <property type="term" value="F:metal ion binding"/>
    <property type="evidence" value="ECO:0007669"/>
    <property type="project" value="UniProtKB-KW"/>
</dbReference>
<dbReference type="GO" id="GO:0008963">
    <property type="term" value="F:phospho-N-acetylmuramoyl-pentapeptide-transferase activity"/>
    <property type="evidence" value="ECO:0007669"/>
    <property type="project" value="UniProtKB-UniRule"/>
</dbReference>
<dbReference type="GO" id="GO:0051992">
    <property type="term" value="F:UDP-N-acetylmuramoyl-L-alanyl-D-glutamyl-meso-2,6-diaminopimelyl-D-alanyl-D-alanine:undecaprenyl-phosphate transferase activity"/>
    <property type="evidence" value="ECO:0007669"/>
    <property type="project" value="RHEA"/>
</dbReference>
<dbReference type="GO" id="GO:0051301">
    <property type="term" value="P:cell division"/>
    <property type="evidence" value="ECO:0007669"/>
    <property type="project" value="UniProtKB-KW"/>
</dbReference>
<dbReference type="GO" id="GO:0071555">
    <property type="term" value="P:cell wall organization"/>
    <property type="evidence" value="ECO:0007669"/>
    <property type="project" value="UniProtKB-KW"/>
</dbReference>
<dbReference type="GO" id="GO:0009252">
    <property type="term" value="P:peptidoglycan biosynthetic process"/>
    <property type="evidence" value="ECO:0007669"/>
    <property type="project" value="UniProtKB-UniRule"/>
</dbReference>
<dbReference type="GO" id="GO:0008360">
    <property type="term" value="P:regulation of cell shape"/>
    <property type="evidence" value="ECO:0007669"/>
    <property type="project" value="UniProtKB-KW"/>
</dbReference>
<dbReference type="CDD" id="cd06852">
    <property type="entry name" value="GT_MraY"/>
    <property type="match status" value="1"/>
</dbReference>
<dbReference type="HAMAP" id="MF_00038">
    <property type="entry name" value="MraY"/>
    <property type="match status" value="1"/>
</dbReference>
<dbReference type="InterPro" id="IPR000715">
    <property type="entry name" value="Glycosyl_transferase_4"/>
</dbReference>
<dbReference type="InterPro" id="IPR003524">
    <property type="entry name" value="PNAcMuramoyl-5peptid_Trfase"/>
</dbReference>
<dbReference type="InterPro" id="IPR018480">
    <property type="entry name" value="PNAcMuramoyl-5peptid_Trfase_CS"/>
</dbReference>
<dbReference type="NCBIfam" id="TIGR00445">
    <property type="entry name" value="mraY"/>
    <property type="match status" value="1"/>
</dbReference>
<dbReference type="PANTHER" id="PTHR22926">
    <property type="entry name" value="PHOSPHO-N-ACETYLMURAMOYL-PENTAPEPTIDE-TRANSFERASE"/>
    <property type="match status" value="1"/>
</dbReference>
<dbReference type="PANTHER" id="PTHR22926:SF5">
    <property type="entry name" value="PHOSPHO-N-ACETYLMURAMOYL-PENTAPEPTIDE-TRANSFERASE HOMOLOG"/>
    <property type="match status" value="1"/>
</dbReference>
<dbReference type="Pfam" id="PF00953">
    <property type="entry name" value="Glycos_transf_4"/>
    <property type="match status" value="1"/>
</dbReference>
<dbReference type="PROSITE" id="PS01348">
    <property type="entry name" value="MRAY_2"/>
    <property type="match status" value="1"/>
</dbReference>
<protein>
    <recommendedName>
        <fullName evidence="1">Phospho-N-acetylmuramoyl-pentapeptide-transferase</fullName>
        <ecNumber evidence="1">2.7.8.13</ecNumber>
    </recommendedName>
    <alternativeName>
        <fullName evidence="1">UDP-MurNAc-pentapeptide phosphotransferase</fullName>
    </alternativeName>
</protein>
<accession>A6TS64</accession>
<reference key="1">
    <citation type="journal article" date="2016" name="Genome Announc.">
        <title>Complete genome sequence of Alkaliphilus metalliredigens strain QYMF, an alkaliphilic and metal-reducing bacterium isolated from borax-contaminated leachate ponds.</title>
        <authorList>
            <person name="Hwang C."/>
            <person name="Copeland A."/>
            <person name="Lucas S."/>
            <person name="Lapidus A."/>
            <person name="Barry K."/>
            <person name="Detter J.C."/>
            <person name="Glavina Del Rio T."/>
            <person name="Hammon N."/>
            <person name="Israni S."/>
            <person name="Dalin E."/>
            <person name="Tice H."/>
            <person name="Pitluck S."/>
            <person name="Chertkov O."/>
            <person name="Brettin T."/>
            <person name="Bruce D."/>
            <person name="Han C."/>
            <person name="Schmutz J."/>
            <person name="Larimer F."/>
            <person name="Land M.L."/>
            <person name="Hauser L."/>
            <person name="Kyrpides N."/>
            <person name="Mikhailova N."/>
            <person name="Ye Q."/>
            <person name="Zhou J."/>
            <person name="Richardson P."/>
            <person name="Fields M.W."/>
        </authorList>
    </citation>
    <scope>NUCLEOTIDE SEQUENCE [LARGE SCALE GENOMIC DNA]</scope>
    <source>
        <strain>QYMF</strain>
    </source>
</reference>